<protein>
    <recommendedName>
        <fullName evidence="1">Fluoride-specific ion channel FluC</fullName>
    </recommendedName>
</protein>
<reference key="1">
    <citation type="submission" date="2006-03" db="EMBL/GenBank/DDBJ databases">
        <title>Complete sequence of Methylobacillus flagellatus KT.</title>
        <authorList>
            <consortium name="US DOE Joint Genome Institute"/>
            <person name="Copeland A."/>
            <person name="Lucas S."/>
            <person name="Lapidus A."/>
            <person name="Barry K."/>
            <person name="Detter J.C."/>
            <person name="Glavina del Rio T."/>
            <person name="Hammon N."/>
            <person name="Israni S."/>
            <person name="Dalin E."/>
            <person name="Tice H."/>
            <person name="Pitluck S."/>
            <person name="Brettin T."/>
            <person name="Bruce D."/>
            <person name="Han C."/>
            <person name="Tapia R."/>
            <person name="Saunders E."/>
            <person name="Gilna P."/>
            <person name="Schmutz J."/>
            <person name="Larimer F."/>
            <person name="Land M."/>
            <person name="Kyrpides N."/>
            <person name="Anderson I."/>
            <person name="Richardson P."/>
        </authorList>
    </citation>
    <scope>NUCLEOTIDE SEQUENCE [LARGE SCALE GENOMIC DNA]</scope>
    <source>
        <strain>ATCC 51484 / DSM 6875 / VKM B-1610 / KT</strain>
    </source>
</reference>
<keyword id="KW-0997">Cell inner membrane</keyword>
<keyword id="KW-1003">Cell membrane</keyword>
<keyword id="KW-0407">Ion channel</keyword>
<keyword id="KW-0406">Ion transport</keyword>
<keyword id="KW-0472">Membrane</keyword>
<keyword id="KW-0479">Metal-binding</keyword>
<keyword id="KW-1185">Reference proteome</keyword>
<keyword id="KW-0915">Sodium</keyword>
<keyword id="KW-0812">Transmembrane</keyword>
<keyword id="KW-1133">Transmembrane helix</keyword>
<keyword id="KW-0813">Transport</keyword>
<evidence type="ECO:0000255" key="1">
    <source>
        <dbReference type="HAMAP-Rule" id="MF_00454"/>
    </source>
</evidence>
<accession>Q1H1Z8</accession>
<comment type="function">
    <text evidence="1">Fluoride-specific ion channel. Important for reducing fluoride concentration in the cell, thus reducing its toxicity.</text>
</comment>
<comment type="catalytic activity">
    <reaction evidence="1">
        <text>fluoride(in) = fluoride(out)</text>
        <dbReference type="Rhea" id="RHEA:76159"/>
        <dbReference type="ChEBI" id="CHEBI:17051"/>
    </reaction>
    <physiologicalReaction direction="left-to-right" evidence="1">
        <dbReference type="Rhea" id="RHEA:76160"/>
    </physiologicalReaction>
</comment>
<comment type="activity regulation">
    <text evidence="1">Na(+) is not transported, but it plays an essential structural role and its presence is essential for fluoride channel function.</text>
</comment>
<comment type="subcellular location">
    <subcellularLocation>
        <location evidence="1">Cell inner membrane</location>
        <topology evidence="1">Multi-pass membrane protein</topology>
    </subcellularLocation>
</comment>
<comment type="similarity">
    <text evidence="1">Belongs to the fluoride channel Fluc/FEX (TC 1.A.43) family.</text>
</comment>
<sequence>MYQVMLVALGGAIGSAARFTLSGLVLRYSLDWRFPLPTFTVNIIGCLVIGMLAGLASKEGFISPDMRVLLFTGLVGGFTTFSAFGLETLVLLREGLVGIAAAYIVSSIVVGLVLMWLGFELVKMTMQA</sequence>
<organism>
    <name type="scientific">Methylobacillus flagellatus (strain ATCC 51484 / DSM 6875 / VKM B-1610 / KT)</name>
    <dbReference type="NCBI Taxonomy" id="265072"/>
    <lineage>
        <taxon>Bacteria</taxon>
        <taxon>Pseudomonadati</taxon>
        <taxon>Pseudomonadota</taxon>
        <taxon>Betaproteobacteria</taxon>
        <taxon>Nitrosomonadales</taxon>
        <taxon>Methylophilaceae</taxon>
        <taxon>Methylobacillus</taxon>
    </lineage>
</organism>
<gene>
    <name evidence="1" type="primary">fluC</name>
    <name evidence="1" type="synonym">crcB</name>
    <name type="ordered locus">Mfla_1221</name>
</gene>
<proteinExistence type="inferred from homology"/>
<name>FLUC_METFK</name>
<dbReference type="EMBL" id="CP000284">
    <property type="protein sequence ID" value="ABE49489.1"/>
    <property type="molecule type" value="Genomic_DNA"/>
</dbReference>
<dbReference type="RefSeq" id="WP_011479443.1">
    <property type="nucleotide sequence ID" value="NC_007947.1"/>
</dbReference>
<dbReference type="SMR" id="Q1H1Z8"/>
<dbReference type="STRING" id="265072.Mfla_1221"/>
<dbReference type="KEGG" id="mfa:Mfla_1221"/>
<dbReference type="eggNOG" id="COG0239">
    <property type="taxonomic scope" value="Bacteria"/>
</dbReference>
<dbReference type="HOGENOM" id="CLU_114342_2_3_4"/>
<dbReference type="Proteomes" id="UP000002440">
    <property type="component" value="Chromosome"/>
</dbReference>
<dbReference type="GO" id="GO:0005886">
    <property type="term" value="C:plasma membrane"/>
    <property type="evidence" value="ECO:0007669"/>
    <property type="project" value="UniProtKB-SubCell"/>
</dbReference>
<dbReference type="GO" id="GO:0062054">
    <property type="term" value="F:fluoride channel activity"/>
    <property type="evidence" value="ECO:0007669"/>
    <property type="project" value="UniProtKB-UniRule"/>
</dbReference>
<dbReference type="GO" id="GO:0046872">
    <property type="term" value="F:metal ion binding"/>
    <property type="evidence" value="ECO:0007669"/>
    <property type="project" value="UniProtKB-KW"/>
</dbReference>
<dbReference type="GO" id="GO:0140114">
    <property type="term" value="P:cellular detoxification of fluoride"/>
    <property type="evidence" value="ECO:0007669"/>
    <property type="project" value="UniProtKB-UniRule"/>
</dbReference>
<dbReference type="HAMAP" id="MF_00454">
    <property type="entry name" value="FluC"/>
    <property type="match status" value="1"/>
</dbReference>
<dbReference type="InterPro" id="IPR003691">
    <property type="entry name" value="FluC"/>
</dbReference>
<dbReference type="NCBIfam" id="TIGR00494">
    <property type="entry name" value="crcB"/>
    <property type="match status" value="1"/>
</dbReference>
<dbReference type="PANTHER" id="PTHR28259">
    <property type="entry name" value="FLUORIDE EXPORT PROTEIN 1-RELATED"/>
    <property type="match status" value="1"/>
</dbReference>
<dbReference type="PANTHER" id="PTHR28259:SF1">
    <property type="entry name" value="FLUORIDE EXPORT PROTEIN 1-RELATED"/>
    <property type="match status" value="1"/>
</dbReference>
<dbReference type="Pfam" id="PF02537">
    <property type="entry name" value="CRCB"/>
    <property type="match status" value="1"/>
</dbReference>
<feature type="chain" id="PRO_0000252898" description="Fluoride-specific ion channel FluC">
    <location>
        <begin position="1"/>
        <end position="128"/>
    </location>
</feature>
<feature type="transmembrane region" description="Helical" evidence="1">
    <location>
        <begin position="6"/>
        <end position="26"/>
    </location>
</feature>
<feature type="transmembrane region" description="Helical" evidence="1">
    <location>
        <begin position="36"/>
        <end position="56"/>
    </location>
</feature>
<feature type="transmembrane region" description="Helical" evidence="1">
    <location>
        <begin position="68"/>
        <end position="88"/>
    </location>
</feature>
<feature type="transmembrane region" description="Helical" evidence="1">
    <location>
        <begin position="99"/>
        <end position="119"/>
    </location>
</feature>
<feature type="binding site" evidence="1">
    <location>
        <position position="76"/>
    </location>
    <ligand>
        <name>Na(+)</name>
        <dbReference type="ChEBI" id="CHEBI:29101"/>
        <note>structural</note>
    </ligand>
</feature>
<feature type="binding site" evidence="1">
    <location>
        <position position="79"/>
    </location>
    <ligand>
        <name>Na(+)</name>
        <dbReference type="ChEBI" id="CHEBI:29101"/>
        <note>structural</note>
    </ligand>
</feature>